<comment type="function">
    <text evidence="1">Catalyzes the isomerization between 2-isopropylmalate and 3-isopropylmalate, via the formation of 2-isopropylmaleate.</text>
</comment>
<comment type="catalytic activity">
    <reaction evidence="1">
        <text>(2R,3S)-3-isopropylmalate = (2S)-2-isopropylmalate</text>
        <dbReference type="Rhea" id="RHEA:32287"/>
        <dbReference type="ChEBI" id="CHEBI:1178"/>
        <dbReference type="ChEBI" id="CHEBI:35121"/>
        <dbReference type="EC" id="4.2.1.33"/>
    </reaction>
</comment>
<comment type="pathway">
    <text evidence="1">Amino-acid biosynthesis; L-leucine biosynthesis; L-leucine from 3-methyl-2-oxobutanoate: step 2/4.</text>
</comment>
<comment type="subunit">
    <text evidence="1">Heterodimer of LeuC and LeuD.</text>
</comment>
<comment type="similarity">
    <text evidence="1">Belongs to the LeuD family. LeuD type 2 subfamily.</text>
</comment>
<accession>A1RVI0</accession>
<proteinExistence type="inferred from homology"/>
<name>LEUD_PYRIL</name>
<organism>
    <name type="scientific">Pyrobaculum islandicum (strain DSM 4184 / JCM 9189 / GEO3)</name>
    <dbReference type="NCBI Taxonomy" id="384616"/>
    <lineage>
        <taxon>Archaea</taxon>
        <taxon>Thermoproteota</taxon>
        <taxon>Thermoprotei</taxon>
        <taxon>Thermoproteales</taxon>
        <taxon>Thermoproteaceae</taxon>
        <taxon>Pyrobaculum</taxon>
    </lineage>
</organism>
<gene>
    <name evidence="1" type="primary">leuD</name>
    <name type="ordered locus">Pisl_1813</name>
</gene>
<dbReference type="EC" id="4.2.1.33" evidence="1"/>
<dbReference type="EMBL" id="CP000504">
    <property type="protein sequence ID" value="ABL88962.1"/>
    <property type="molecule type" value="Genomic_DNA"/>
</dbReference>
<dbReference type="RefSeq" id="WP_011763537.1">
    <property type="nucleotide sequence ID" value="NC_008701.1"/>
</dbReference>
<dbReference type="SMR" id="A1RVI0"/>
<dbReference type="STRING" id="384616.Pisl_1813"/>
<dbReference type="GeneID" id="4617094"/>
<dbReference type="KEGG" id="pis:Pisl_1813"/>
<dbReference type="eggNOG" id="arCOG02230">
    <property type="taxonomic scope" value="Archaea"/>
</dbReference>
<dbReference type="HOGENOM" id="CLU_081378_1_1_2"/>
<dbReference type="OrthoDB" id="6505at2157"/>
<dbReference type="UniPathway" id="UPA00048">
    <property type="reaction ID" value="UER00071"/>
</dbReference>
<dbReference type="Proteomes" id="UP000002595">
    <property type="component" value="Chromosome"/>
</dbReference>
<dbReference type="GO" id="GO:0003861">
    <property type="term" value="F:3-isopropylmalate dehydratase activity"/>
    <property type="evidence" value="ECO:0007669"/>
    <property type="project" value="UniProtKB-UniRule"/>
</dbReference>
<dbReference type="GO" id="GO:0009098">
    <property type="term" value="P:L-leucine biosynthetic process"/>
    <property type="evidence" value="ECO:0007669"/>
    <property type="project" value="UniProtKB-UniRule"/>
</dbReference>
<dbReference type="CDD" id="cd01577">
    <property type="entry name" value="IPMI_Swivel"/>
    <property type="match status" value="1"/>
</dbReference>
<dbReference type="Gene3D" id="3.20.19.10">
    <property type="entry name" value="Aconitase, domain 4"/>
    <property type="match status" value="1"/>
</dbReference>
<dbReference type="HAMAP" id="MF_01032">
    <property type="entry name" value="LeuD_type2"/>
    <property type="match status" value="1"/>
</dbReference>
<dbReference type="InterPro" id="IPR015928">
    <property type="entry name" value="Aconitase/3IPM_dehydase_swvl"/>
</dbReference>
<dbReference type="InterPro" id="IPR000573">
    <property type="entry name" value="AconitaseA/IPMdHydase_ssu_swvl"/>
</dbReference>
<dbReference type="InterPro" id="IPR033940">
    <property type="entry name" value="IPMI_Swivel"/>
</dbReference>
<dbReference type="InterPro" id="IPR050075">
    <property type="entry name" value="LeuD"/>
</dbReference>
<dbReference type="InterPro" id="IPR011827">
    <property type="entry name" value="LeuD_type2/HacB/DmdB"/>
</dbReference>
<dbReference type="NCBIfam" id="TIGR02087">
    <property type="entry name" value="LEUD_arch"/>
    <property type="match status" value="1"/>
</dbReference>
<dbReference type="PANTHER" id="PTHR43345:SF2">
    <property type="entry name" value="3-ISOPROPYLMALATE DEHYDRATASE SMALL SUBUNIT 1"/>
    <property type="match status" value="1"/>
</dbReference>
<dbReference type="PANTHER" id="PTHR43345">
    <property type="entry name" value="3-ISOPROPYLMALATE DEHYDRATASE SMALL SUBUNIT 2-RELATED-RELATED"/>
    <property type="match status" value="1"/>
</dbReference>
<dbReference type="Pfam" id="PF00694">
    <property type="entry name" value="Aconitase_C"/>
    <property type="match status" value="1"/>
</dbReference>
<dbReference type="SUPFAM" id="SSF52016">
    <property type="entry name" value="LeuD/IlvD-like"/>
    <property type="match status" value="1"/>
</dbReference>
<protein>
    <recommendedName>
        <fullName evidence="1">3-isopropylmalate dehydratase small subunit</fullName>
        <ecNumber evidence="1">4.2.1.33</ecNumber>
    </recommendedName>
    <alternativeName>
        <fullName evidence="1">Alpha-IPM isomerase</fullName>
        <shortName evidence="1">IPMI</shortName>
    </alternativeName>
    <alternativeName>
        <fullName evidence="1">Isopropylmalate isomerase</fullName>
    </alternativeName>
</protein>
<feature type="chain" id="PRO_1000072971" description="3-isopropylmalate dehydratase small subunit">
    <location>
        <begin position="1"/>
        <end position="161"/>
    </location>
</feature>
<evidence type="ECO:0000255" key="1">
    <source>
        <dbReference type="HAMAP-Rule" id="MF_01032"/>
    </source>
</evidence>
<sequence length="161" mass="17358">MKIRGRAIVYGDKIDTDVIIPAKYLVYTDPNILGQHAMEPIDPEFPKKAKGAILVAGRAFGMGSSREQAAIALKGAGVLAVVAESFARIFFRNAINIGLPVLQVPEITKKVKEGEELEVDIENGYCINLATGEKIEGKPIRGLPLAILKAGGLTNYLKSLR</sequence>
<keyword id="KW-0028">Amino-acid biosynthesis</keyword>
<keyword id="KW-0100">Branched-chain amino acid biosynthesis</keyword>
<keyword id="KW-0432">Leucine biosynthesis</keyword>
<keyword id="KW-0456">Lyase</keyword>
<reference key="1">
    <citation type="submission" date="2006-12" db="EMBL/GenBank/DDBJ databases">
        <title>Complete sequence of Pyrobaculum islandicum DSM 4184.</title>
        <authorList>
            <person name="Copeland A."/>
            <person name="Lucas S."/>
            <person name="Lapidus A."/>
            <person name="Barry K."/>
            <person name="Detter J.C."/>
            <person name="Glavina del Rio T."/>
            <person name="Dalin E."/>
            <person name="Tice H."/>
            <person name="Pitluck S."/>
            <person name="Meincke L."/>
            <person name="Brettin T."/>
            <person name="Bruce D."/>
            <person name="Han C."/>
            <person name="Tapia R."/>
            <person name="Gilna P."/>
            <person name="Schmutz J."/>
            <person name="Larimer F."/>
            <person name="Land M."/>
            <person name="Hauser L."/>
            <person name="Kyrpides N."/>
            <person name="Mikhailova N."/>
            <person name="Cozen A.E."/>
            <person name="Fitz-Gibbon S.T."/>
            <person name="House C.H."/>
            <person name="Saltikov C."/>
            <person name="Lowe T."/>
            <person name="Richardson P."/>
        </authorList>
    </citation>
    <scope>NUCLEOTIDE SEQUENCE [LARGE SCALE GENOMIC DNA]</scope>
    <source>
        <strain>DSM 4184 / JCM 9189 / GEO3</strain>
    </source>
</reference>